<gene>
    <name type="primary">thrB</name>
    <name type="ordered locus">PA5495</name>
</gene>
<feature type="chain" id="PRO_0000172194" description="Homoserine kinase">
    <location>
        <begin position="1"/>
        <end position="316"/>
    </location>
</feature>
<comment type="catalytic activity">
    <reaction>
        <text>L-homoserine + ATP = O-phospho-L-homoserine + ADP + H(+)</text>
        <dbReference type="Rhea" id="RHEA:13985"/>
        <dbReference type="ChEBI" id="CHEBI:15378"/>
        <dbReference type="ChEBI" id="CHEBI:30616"/>
        <dbReference type="ChEBI" id="CHEBI:57476"/>
        <dbReference type="ChEBI" id="CHEBI:57590"/>
        <dbReference type="ChEBI" id="CHEBI:456216"/>
        <dbReference type="EC" id="2.7.1.39"/>
    </reaction>
</comment>
<comment type="pathway">
    <text>Amino-acid biosynthesis; L-threonine biosynthesis; L-threonine from L-aspartate: step 4/5.</text>
</comment>
<comment type="disruption phenotype">
    <text evidence="1">Cells lacking thrB are still able to grow in a minimal medium without the addition of threonine.</text>
</comment>
<comment type="similarity">
    <text evidence="2">Belongs to the pseudomonas-type ThrB family.</text>
</comment>
<comment type="sequence caution" evidence="2">
    <conflict type="frameshift">
        <sequence resource="EMBL-CDS" id="CAA46169"/>
    </conflict>
</comment>
<accession>P29364</accession>
<accession>Q9HT78</accession>
<proteinExistence type="inferred from homology"/>
<protein>
    <recommendedName>
        <fullName>Homoserine kinase</fullName>
        <shortName>HK</shortName>
        <shortName>HSK</shortName>
        <ecNumber>2.7.1.39</ecNumber>
    </recommendedName>
</protein>
<evidence type="ECO:0000269" key="1">
    <source>
    </source>
</evidence>
<evidence type="ECO:0000305" key="2"/>
<organism>
    <name type="scientific">Pseudomonas aeruginosa (strain ATCC 15692 / DSM 22644 / CIP 104116 / JCM 14847 / LMG 12228 / 1C / PRS 101 / PAO1)</name>
    <dbReference type="NCBI Taxonomy" id="208964"/>
    <lineage>
        <taxon>Bacteria</taxon>
        <taxon>Pseudomonadati</taxon>
        <taxon>Pseudomonadota</taxon>
        <taxon>Gammaproteobacteria</taxon>
        <taxon>Pseudomonadales</taxon>
        <taxon>Pseudomonadaceae</taxon>
        <taxon>Pseudomonas</taxon>
    </lineage>
</organism>
<keyword id="KW-0028">Amino-acid biosynthesis</keyword>
<keyword id="KW-0067">ATP-binding</keyword>
<keyword id="KW-0418">Kinase</keyword>
<keyword id="KW-0547">Nucleotide-binding</keyword>
<keyword id="KW-1185">Reference proteome</keyword>
<keyword id="KW-0791">Threonine biosynthesis</keyword>
<keyword id="KW-0808">Transferase</keyword>
<name>KHSE_PSEAE</name>
<reference key="1">
    <citation type="journal article" date="1992" name="Mol. Microbiol.">
        <title>Isolation, organization and expression of the Pseudomonas aeruginosa threonine genes.</title>
        <authorList>
            <person name="Clepet C."/>
            <person name="Borne F."/>
            <person name="Krishnapillai V."/>
            <person name="Baird C."/>
            <person name="Patte J.-C."/>
            <person name="Cami B."/>
        </authorList>
    </citation>
    <scope>NUCLEOTIDE SEQUENCE [GENOMIC DNA]</scope>
    <scope>DISRUPTION PHENOTYPE</scope>
    <source>
        <strain>ATCC 15692 / DSM 22644 / CIP 104116 / JCM 14847 / LMG 12228 / 1C / PRS 101 / PAO1</strain>
    </source>
</reference>
<reference key="2">
    <citation type="journal article" date="2000" name="Nature">
        <title>Complete genome sequence of Pseudomonas aeruginosa PAO1, an opportunistic pathogen.</title>
        <authorList>
            <person name="Stover C.K."/>
            <person name="Pham X.-Q.T."/>
            <person name="Erwin A.L."/>
            <person name="Mizoguchi S.D."/>
            <person name="Warrener P."/>
            <person name="Hickey M.J."/>
            <person name="Brinkman F.S.L."/>
            <person name="Hufnagle W.O."/>
            <person name="Kowalik D.J."/>
            <person name="Lagrou M."/>
            <person name="Garber R.L."/>
            <person name="Goltry L."/>
            <person name="Tolentino E."/>
            <person name="Westbrock-Wadman S."/>
            <person name="Yuan Y."/>
            <person name="Brody L.L."/>
            <person name="Coulter S.N."/>
            <person name="Folger K.R."/>
            <person name="Kas A."/>
            <person name="Larbig K."/>
            <person name="Lim R.M."/>
            <person name="Smith K.A."/>
            <person name="Spencer D.H."/>
            <person name="Wong G.K.-S."/>
            <person name="Wu Z."/>
            <person name="Paulsen I.T."/>
            <person name="Reizer J."/>
            <person name="Saier M.H. Jr."/>
            <person name="Hancock R.E.W."/>
            <person name="Lory S."/>
            <person name="Olson M.V."/>
        </authorList>
    </citation>
    <scope>NUCLEOTIDE SEQUENCE [LARGE SCALE GENOMIC DNA]</scope>
    <source>
        <strain>ATCC 15692 / DSM 22644 / CIP 104116 / JCM 14847 / LMG 12228 / 1C / PRS 101 / PAO1</strain>
    </source>
</reference>
<dbReference type="EC" id="2.7.1.39"/>
<dbReference type="EMBL" id="X65034">
    <property type="protein sequence ID" value="CAA46169.1"/>
    <property type="status" value="ALT_FRAME"/>
    <property type="molecule type" value="Genomic_DNA"/>
</dbReference>
<dbReference type="EMBL" id="AE004091">
    <property type="protein sequence ID" value="AAG08880.1"/>
    <property type="molecule type" value="Genomic_DNA"/>
</dbReference>
<dbReference type="PIR" id="H82958">
    <property type="entry name" value="H82958"/>
</dbReference>
<dbReference type="PIR" id="S27981">
    <property type="entry name" value="S27981"/>
</dbReference>
<dbReference type="RefSeq" id="NP_254182.1">
    <property type="nucleotide sequence ID" value="NC_002516.2"/>
</dbReference>
<dbReference type="RefSeq" id="WP_003114124.1">
    <property type="nucleotide sequence ID" value="NZ_QZGE01000012.1"/>
</dbReference>
<dbReference type="SMR" id="P29364"/>
<dbReference type="STRING" id="208964.PA5495"/>
<dbReference type="PaxDb" id="208964-PA5495"/>
<dbReference type="GeneID" id="877825"/>
<dbReference type="KEGG" id="pae:PA5495"/>
<dbReference type="PATRIC" id="fig|208964.12.peg.5760"/>
<dbReference type="PseudoCAP" id="PA5495"/>
<dbReference type="HOGENOM" id="CLU_053300_0_0_6"/>
<dbReference type="InParanoid" id="P29364"/>
<dbReference type="OrthoDB" id="9777460at2"/>
<dbReference type="PhylomeDB" id="P29364"/>
<dbReference type="BioCyc" id="PAER208964:G1FZ6-5622-MONOMER"/>
<dbReference type="UniPathway" id="UPA00050">
    <property type="reaction ID" value="UER00064"/>
</dbReference>
<dbReference type="Proteomes" id="UP000002438">
    <property type="component" value="Chromosome"/>
</dbReference>
<dbReference type="GO" id="GO:0005524">
    <property type="term" value="F:ATP binding"/>
    <property type="evidence" value="ECO:0007669"/>
    <property type="project" value="UniProtKB-KW"/>
</dbReference>
<dbReference type="GO" id="GO:0004413">
    <property type="term" value="F:homoserine kinase activity"/>
    <property type="evidence" value="ECO:0000314"/>
    <property type="project" value="PseudoCAP"/>
</dbReference>
<dbReference type="GO" id="GO:0009088">
    <property type="term" value="P:threonine biosynthetic process"/>
    <property type="evidence" value="ECO:0000314"/>
    <property type="project" value="PseudoCAP"/>
</dbReference>
<dbReference type="CDD" id="cd05153">
    <property type="entry name" value="HomoserineK_II"/>
    <property type="match status" value="1"/>
</dbReference>
<dbReference type="Gene3D" id="3.90.1200.10">
    <property type="match status" value="1"/>
</dbReference>
<dbReference type="Gene3D" id="3.30.200.20">
    <property type="entry name" value="Phosphorylase Kinase, domain 1"/>
    <property type="match status" value="1"/>
</dbReference>
<dbReference type="HAMAP" id="MF_00301">
    <property type="entry name" value="Homoser_kinase_2"/>
    <property type="match status" value="1"/>
</dbReference>
<dbReference type="InterPro" id="IPR002575">
    <property type="entry name" value="Aminoglycoside_PTrfase"/>
</dbReference>
<dbReference type="InterPro" id="IPR005280">
    <property type="entry name" value="Homoserine_kinase_II"/>
</dbReference>
<dbReference type="InterPro" id="IPR011009">
    <property type="entry name" value="Kinase-like_dom_sf"/>
</dbReference>
<dbReference type="InterPro" id="IPR050249">
    <property type="entry name" value="Pseudomonas-type_ThrB"/>
</dbReference>
<dbReference type="NCBIfam" id="NF003558">
    <property type="entry name" value="PRK05231.1"/>
    <property type="match status" value="1"/>
</dbReference>
<dbReference type="NCBIfam" id="TIGR00938">
    <property type="entry name" value="thrB_alt"/>
    <property type="match status" value="1"/>
</dbReference>
<dbReference type="PANTHER" id="PTHR21064:SF6">
    <property type="entry name" value="AMINOGLYCOSIDE PHOSPHOTRANSFERASE DOMAIN-CONTAINING PROTEIN"/>
    <property type="match status" value="1"/>
</dbReference>
<dbReference type="PANTHER" id="PTHR21064">
    <property type="entry name" value="AMINOGLYCOSIDE PHOSPHOTRANSFERASE DOMAIN-CONTAINING PROTEIN-RELATED"/>
    <property type="match status" value="1"/>
</dbReference>
<dbReference type="Pfam" id="PF01636">
    <property type="entry name" value="APH"/>
    <property type="match status" value="1"/>
</dbReference>
<dbReference type="SUPFAM" id="SSF56112">
    <property type="entry name" value="Protein kinase-like (PK-like)"/>
    <property type="match status" value="1"/>
</dbReference>
<sequence>MSVFTPLERSTLEAFLAPYDLGRLRDFRGIAEGSENSNFFVSLEHGEFVLTLVERGPVQDLPFFIELLDVLHEDGLPVPYALRTRDGEALRRLEGKPALLQPRLAGRHERQPNAHHCQEVGDLLGHLHAATRGRILERPSDRGLPWMLEQGANLAPRLPEQARALLAPALAEIAALDAERPALPRANLHADLFRDNVLFDGPHLAGLIDFYNACSGWMLYDLAITLNDWCSNTDGSLDPARARALLAAYANRRPFTALEAEHWPSMLRVACVRFWLSRLIAAEAFAGQDVLIHDPAEFEIRLAQRQNVEIHLPFAL</sequence>